<sequence length="129" mass="15452">MESKVEQGVKNLNMENDHQEKEEKEEKPQDASKRDPIVALPFEAGDYYVPRGGRRRFRVRQPIVHYRWDLMHRVGEPQGRMREENVQRFGDDVRQLMEKLRERQLSHSLRAVSTDPPHHDHHDEFCLMP</sequence>
<dbReference type="EMBL" id="AF097439">
    <property type="protein sequence ID" value="AAD24430.1"/>
    <property type="molecule type" value="mRNA"/>
</dbReference>
<dbReference type="EMBL" id="AK132005">
    <property type="protein sequence ID" value="BAE20934.1"/>
    <property type="molecule type" value="mRNA"/>
</dbReference>
<dbReference type="EMBL" id="BC027529">
    <property type="protein sequence ID" value="AAH27529.1"/>
    <property type="molecule type" value="mRNA"/>
</dbReference>
<dbReference type="CCDS" id="CCDS30413.1"/>
<dbReference type="RefSeq" id="NP_033879.1">
    <property type="nucleotide sequence ID" value="NM_009749.2"/>
</dbReference>
<dbReference type="BioGRID" id="198338">
    <property type="interactions" value="1"/>
</dbReference>
<dbReference type="FunCoup" id="Q9WTZ8">
    <property type="interactions" value="145"/>
</dbReference>
<dbReference type="MINT" id="Q9WTZ8"/>
<dbReference type="STRING" id="10090.ENSMUSP00000043113"/>
<dbReference type="iPTMnet" id="Q9WTZ8"/>
<dbReference type="PhosphoSitePlus" id="Q9WTZ8"/>
<dbReference type="PaxDb" id="10090-ENSMUSP00000043113"/>
<dbReference type="ProteomicsDB" id="273557"/>
<dbReference type="DNASU" id="12069"/>
<dbReference type="Ensembl" id="ENSMUST00000049130.8">
    <property type="protein sequence ID" value="ENSMUSP00000043113.8"/>
    <property type="gene ID" value="ENSMUSG00000042750.8"/>
</dbReference>
<dbReference type="GeneID" id="12069"/>
<dbReference type="KEGG" id="mmu:12069"/>
<dbReference type="UCSC" id="uc009uia.2">
    <property type="organism name" value="mouse"/>
</dbReference>
<dbReference type="AGR" id="MGI:1338017"/>
<dbReference type="CTD" id="84707"/>
<dbReference type="MGI" id="MGI:1338017">
    <property type="gene designation" value="Bex2"/>
</dbReference>
<dbReference type="VEuPathDB" id="HostDB:ENSMUSG00000042750"/>
<dbReference type="eggNOG" id="ENOG502RW3Y">
    <property type="taxonomic scope" value="Eukaryota"/>
</dbReference>
<dbReference type="GeneTree" id="ENSGT00940000153412"/>
<dbReference type="HOGENOM" id="CLU_123122_1_0_1"/>
<dbReference type="InParanoid" id="Q9WTZ8"/>
<dbReference type="OMA" id="PPYHEHH"/>
<dbReference type="OrthoDB" id="9833968at2759"/>
<dbReference type="PhylomeDB" id="Q9WTZ8"/>
<dbReference type="TreeFam" id="TF337909"/>
<dbReference type="BioGRID-ORCS" id="12069">
    <property type="hits" value="3 hits in 77 CRISPR screens"/>
</dbReference>
<dbReference type="PRO" id="PR:Q9WTZ8"/>
<dbReference type="Proteomes" id="UP000000589">
    <property type="component" value="Chromosome X"/>
</dbReference>
<dbReference type="RNAct" id="Q9WTZ8">
    <property type="molecule type" value="protein"/>
</dbReference>
<dbReference type="Bgee" id="ENSMUSG00000042750">
    <property type="expression patterns" value="Expressed in arcuate nucleus of hypothalamus and 208 other cell types or tissues"/>
</dbReference>
<dbReference type="GO" id="GO:0005737">
    <property type="term" value="C:cytoplasm"/>
    <property type="evidence" value="ECO:0000266"/>
    <property type="project" value="MGI"/>
</dbReference>
<dbReference type="GO" id="GO:0005634">
    <property type="term" value="C:nucleus"/>
    <property type="evidence" value="ECO:0000266"/>
    <property type="project" value="MGI"/>
</dbReference>
<dbReference type="GO" id="GO:0046872">
    <property type="term" value="F:metal ion binding"/>
    <property type="evidence" value="ECO:0007669"/>
    <property type="project" value="UniProtKB-KW"/>
</dbReference>
<dbReference type="GO" id="GO:0140678">
    <property type="term" value="F:molecular function inhibitor activity"/>
    <property type="evidence" value="ECO:0000314"/>
    <property type="project" value="UniProtKB"/>
</dbReference>
<dbReference type="GO" id="GO:0006915">
    <property type="term" value="P:apoptotic process"/>
    <property type="evidence" value="ECO:0007669"/>
    <property type="project" value="UniProtKB-KW"/>
</dbReference>
<dbReference type="GO" id="GO:0031397">
    <property type="term" value="P:negative regulation of protein ubiquitination"/>
    <property type="evidence" value="ECO:0000314"/>
    <property type="project" value="UniProtKB"/>
</dbReference>
<dbReference type="InterPro" id="IPR007623">
    <property type="entry name" value="BEX"/>
</dbReference>
<dbReference type="InterPro" id="IPR021156">
    <property type="entry name" value="TF_A-like/BEX"/>
</dbReference>
<dbReference type="PANTHER" id="PTHR19430:SF3">
    <property type="entry name" value="PROTEIN BEX1"/>
    <property type="match status" value="1"/>
</dbReference>
<dbReference type="PANTHER" id="PTHR19430">
    <property type="entry name" value="PROTEIN BEX1-RELATED"/>
    <property type="match status" value="1"/>
</dbReference>
<dbReference type="Pfam" id="PF04538">
    <property type="entry name" value="BEX"/>
    <property type="match status" value="1"/>
</dbReference>
<dbReference type="PIRSF" id="PIRSF008633">
    <property type="entry name" value="BEX"/>
    <property type="match status" value="1"/>
</dbReference>
<organism>
    <name type="scientific">Mus musculus</name>
    <name type="common">Mouse</name>
    <dbReference type="NCBI Taxonomy" id="10090"/>
    <lineage>
        <taxon>Eukaryota</taxon>
        <taxon>Metazoa</taxon>
        <taxon>Chordata</taxon>
        <taxon>Craniata</taxon>
        <taxon>Vertebrata</taxon>
        <taxon>Euteleostomi</taxon>
        <taxon>Mammalia</taxon>
        <taxon>Eutheria</taxon>
        <taxon>Euarchontoglires</taxon>
        <taxon>Glires</taxon>
        <taxon>Rodentia</taxon>
        <taxon>Myomorpha</taxon>
        <taxon>Muroidea</taxon>
        <taxon>Muridae</taxon>
        <taxon>Murinae</taxon>
        <taxon>Mus</taxon>
        <taxon>Mus</taxon>
    </lineage>
</organism>
<comment type="function">
    <text evidence="2 8">Regulator of mitochondrial apoptosis and G1 cell cycle (By similarity). Regulates the level of PP2A regulatory subunit B and PP2A phosphatase activity (By similarity). In absence of reductive stress, acts as a pseudosubstrate for the CRL2(FEM1B) complex: associates with FEM1B via zinc, thereby preventing association between FEM1B and its substrates (PubMed:34562363).</text>
</comment>
<comment type="subunit">
    <text evidence="2 5 6">Interacts with LMO2, possibly leading to regulate the transcriptional activity of a DNA-binding complex containing LMO2 (By similarity). Interacts with OMP (PubMed:12911636, PubMed:15198671).</text>
</comment>
<comment type="subcellular location">
    <subcellularLocation>
        <location evidence="1">Cytoplasm</location>
    </subcellularLocation>
    <subcellularLocation>
        <location evidence="2">Nucleus</location>
    </subcellularLocation>
</comment>
<comment type="tissue specificity">
    <text evidence="7">Primarily localized to neuronal cells within several regions of the brain, including the olfactory epithelium, bulb, peri/paraventricular nuclei, suprachiasmatic nucleus, arcuate nucleus, median eminence, lateral hypothalamic area, thalamus, hippocampus and cerebellum (at protein level).</text>
</comment>
<comment type="domain">
    <text evidence="3">The histidine cluster (His cluster) and Cys-126 mediate zinc-binding.</text>
</comment>
<comment type="similarity">
    <text evidence="10">Belongs to the BEX family.</text>
</comment>
<evidence type="ECO:0000250" key="1">
    <source>
        <dbReference type="UniProtKB" id="Q3MKQ1"/>
    </source>
</evidence>
<evidence type="ECO:0000250" key="2">
    <source>
        <dbReference type="UniProtKB" id="Q9BXY8"/>
    </source>
</evidence>
<evidence type="ECO:0000250" key="3">
    <source>
        <dbReference type="UniProtKB" id="Q9WTZ9"/>
    </source>
</evidence>
<evidence type="ECO:0000256" key="4">
    <source>
        <dbReference type="SAM" id="MobiDB-lite"/>
    </source>
</evidence>
<evidence type="ECO:0000269" key="5">
    <source>
    </source>
</evidence>
<evidence type="ECO:0000269" key="6">
    <source>
    </source>
</evidence>
<evidence type="ECO:0000269" key="7">
    <source>
    </source>
</evidence>
<evidence type="ECO:0000269" key="8">
    <source>
    </source>
</evidence>
<evidence type="ECO:0000303" key="9">
    <source>
    </source>
</evidence>
<evidence type="ECO:0000305" key="10"/>
<evidence type="ECO:0000312" key="11">
    <source>
        <dbReference type="MGI" id="MGI:1338017"/>
    </source>
</evidence>
<evidence type="ECO:0007744" key="12">
    <source>
    </source>
</evidence>
<proteinExistence type="evidence at protein level"/>
<accession>Q9WTZ8</accession>
<keyword id="KW-0053">Apoptosis</keyword>
<keyword id="KW-0131">Cell cycle</keyword>
<keyword id="KW-0963">Cytoplasm</keyword>
<keyword id="KW-0479">Metal-binding</keyword>
<keyword id="KW-0488">Methylation</keyword>
<keyword id="KW-0539">Nucleus</keyword>
<keyword id="KW-1185">Reference proteome</keyword>
<keyword id="KW-0862">Zinc</keyword>
<name>BEX2_MOUSE</name>
<gene>
    <name evidence="9 11" type="primary">Bex2</name>
</gene>
<protein>
    <recommendedName>
        <fullName>Protein BEX2</fullName>
    </recommendedName>
    <alternativeName>
        <fullName>Brain-expressed X-linked protein 2 homolog</fullName>
    </alternativeName>
</protein>
<reference key="1">
    <citation type="journal article" date="1999" name="Hum. Mol. Genet.">
        <title>Bex1, a gene with increased expression in parthenogenetic embryos, is a member of a novel gene family on the mouse X chromosome.</title>
        <authorList>
            <person name="Brown A.L."/>
            <person name="Kay G.F."/>
        </authorList>
    </citation>
    <scope>NUCLEOTIDE SEQUENCE [MRNA]</scope>
    <source>
        <strain>C57BL/6J</strain>
    </source>
</reference>
<reference key="2">
    <citation type="journal article" date="1999" name="Hum. Mol. Genet.">
        <authorList>
            <person name="Brown A.L."/>
            <person name="Kay G.F."/>
        </authorList>
    </citation>
    <scope>ERRATUM OF PUBMED:10072429</scope>
</reference>
<reference key="3">
    <citation type="journal article" date="2005" name="Science">
        <title>The transcriptional landscape of the mammalian genome.</title>
        <authorList>
            <person name="Carninci P."/>
            <person name="Kasukawa T."/>
            <person name="Katayama S."/>
            <person name="Gough J."/>
            <person name="Frith M.C."/>
            <person name="Maeda N."/>
            <person name="Oyama R."/>
            <person name="Ravasi T."/>
            <person name="Lenhard B."/>
            <person name="Wells C."/>
            <person name="Kodzius R."/>
            <person name="Shimokawa K."/>
            <person name="Bajic V.B."/>
            <person name="Brenner S.E."/>
            <person name="Batalov S."/>
            <person name="Forrest A.R."/>
            <person name="Zavolan M."/>
            <person name="Davis M.J."/>
            <person name="Wilming L.G."/>
            <person name="Aidinis V."/>
            <person name="Allen J.E."/>
            <person name="Ambesi-Impiombato A."/>
            <person name="Apweiler R."/>
            <person name="Aturaliya R.N."/>
            <person name="Bailey T.L."/>
            <person name="Bansal M."/>
            <person name="Baxter L."/>
            <person name="Beisel K.W."/>
            <person name="Bersano T."/>
            <person name="Bono H."/>
            <person name="Chalk A.M."/>
            <person name="Chiu K.P."/>
            <person name="Choudhary V."/>
            <person name="Christoffels A."/>
            <person name="Clutterbuck D.R."/>
            <person name="Crowe M.L."/>
            <person name="Dalla E."/>
            <person name="Dalrymple B.P."/>
            <person name="de Bono B."/>
            <person name="Della Gatta G."/>
            <person name="di Bernardo D."/>
            <person name="Down T."/>
            <person name="Engstrom P."/>
            <person name="Fagiolini M."/>
            <person name="Faulkner G."/>
            <person name="Fletcher C.F."/>
            <person name="Fukushima T."/>
            <person name="Furuno M."/>
            <person name="Futaki S."/>
            <person name="Gariboldi M."/>
            <person name="Georgii-Hemming P."/>
            <person name="Gingeras T.R."/>
            <person name="Gojobori T."/>
            <person name="Green R.E."/>
            <person name="Gustincich S."/>
            <person name="Harbers M."/>
            <person name="Hayashi Y."/>
            <person name="Hensch T.K."/>
            <person name="Hirokawa N."/>
            <person name="Hill D."/>
            <person name="Huminiecki L."/>
            <person name="Iacono M."/>
            <person name="Ikeo K."/>
            <person name="Iwama A."/>
            <person name="Ishikawa T."/>
            <person name="Jakt M."/>
            <person name="Kanapin A."/>
            <person name="Katoh M."/>
            <person name="Kawasawa Y."/>
            <person name="Kelso J."/>
            <person name="Kitamura H."/>
            <person name="Kitano H."/>
            <person name="Kollias G."/>
            <person name="Krishnan S.P."/>
            <person name="Kruger A."/>
            <person name="Kummerfeld S.K."/>
            <person name="Kurochkin I.V."/>
            <person name="Lareau L.F."/>
            <person name="Lazarevic D."/>
            <person name="Lipovich L."/>
            <person name="Liu J."/>
            <person name="Liuni S."/>
            <person name="McWilliam S."/>
            <person name="Madan Babu M."/>
            <person name="Madera M."/>
            <person name="Marchionni L."/>
            <person name="Matsuda H."/>
            <person name="Matsuzawa S."/>
            <person name="Miki H."/>
            <person name="Mignone F."/>
            <person name="Miyake S."/>
            <person name="Morris K."/>
            <person name="Mottagui-Tabar S."/>
            <person name="Mulder N."/>
            <person name="Nakano N."/>
            <person name="Nakauchi H."/>
            <person name="Ng P."/>
            <person name="Nilsson R."/>
            <person name="Nishiguchi S."/>
            <person name="Nishikawa S."/>
            <person name="Nori F."/>
            <person name="Ohara O."/>
            <person name="Okazaki Y."/>
            <person name="Orlando V."/>
            <person name="Pang K.C."/>
            <person name="Pavan W.J."/>
            <person name="Pavesi G."/>
            <person name="Pesole G."/>
            <person name="Petrovsky N."/>
            <person name="Piazza S."/>
            <person name="Reed J."/>
            <person name="Reid J.F."/>
            <person name="Ring B.Z."/>
            <person name="Ringwald M."/>
            <person name="Rost B."/>
            <person name="Ruan Y."/>
            <person name="Salzberg S.L."/>
            <person name="Sandelin A."/>
            <person name="Schneider C."/>
            <person name="Schoenbach C."/>
            <person name="Sekiguchi K."/>
            <person name="Semple C.A."/>
            <person name="Seno S."/>
            <person name="Sessa L."/>
            <person name="Sheng Y."/>
            <person name="Shibata Y."/>
            <person name="Shimada H."/>
            <person name="Shimada K."/>
            <person name="Silva D."/>
            <person name="Sinclair B."/>
            <person name="Sperling S."/>
            <person name="Stupka E."/>
            <person name="Sugiura K."/>
            <person name="Sultana R."/>
            <person name="Takenaka Y."/>
            <person name="Taki K."/>
            <person name="Tammoja K."/>
            <person name="Tan S.L."/>
            <person name="Tang S."/>
            <person name="Taylor M.S."/>
            <person name="Tegner J."/>
            <person name="Teichmann S.A."/>
            <person name="Ueda H.R."/>
            <person name="van Nimwegen E."/>
            <person name="Verardo R."/>
            <person name="Wei C.L."/>
            <person name="Yagi K."/>
            <person name="Yamanishi H."/>
            <person name="Zabarovsky E."/>
            <person name="Zhu S."/>
            <person name="Zimmer A."/>
            <person name="Hide W."/>
            <person name="Bult C."/>
            <person name="Grimmond S.M."/>
            <person name="Teasdale R.D."/>
            <person name="Liu E.T."/>
            <person name="Brusic V."/>
            <person name="Quackenbush J."/>
            <person name="Wahlestedt C."/>
            <person name="Mattick J.S."/>
            <person name="Hume D.A."/>
            <person name="Kai C."/>
            <person name="Sasaki D."/>
            <person name="Tomaru Y."/>
            <person name="Fukuda S."/>
            <person name="Kanamori-Katayama M."/>
            <person name="Suzuki M."/>
            <person name="Aoki J."/>
            <person name="Arakawa T."/>
            <person name="Iida J."/>
            <person name="Imamura K."/>
            <person name="Itoh M."/>
            <person name="Kato T."/>
            <person name="Kawaji H."/>
            <person name="Kawagashira N."/>
            <person name="Kawashima T."/>
            <person name="Kojima M."/>
            <person name="Kondo S."/>
            <person name="Konno H."/>
            <person name="Nakano K."/>
            <person name="Ninomiya N."/>
            <person name="Nishio T."/>
            <person name="Okada M."/>
            <person name="Plessy C."/>
            <person name="Shibata K."/>
            <person name="Shiraki T."/>
            <person name="Suzuki S."/>
            <person name="Tagami M."/>
            <person name="Waki K."/>
            <person name="Watahiki A."/>
            <person name="Okamura-Oho Y."/>
            <person name="Suzuki H."/>
            <person name="Kawai J."/>
            <person name="Hayashizaki Y."/>
        </authorList>
    </citation>
    <scope>NUCLEOTIDE SEQUENCE [LARGE SCALE MRNA]</scope>
    <source>
        <strain>C57BL/6J</strain>
    </source>
</reference>
<reference key="4">
    <citation type="journal article" date="2004" name="Genome Res.">
        <title>The status, quality, and expansion of the NIH full-length cDNA project: the Mammalian Gene Collection (MGC).</title>
        <authorList>
            <consortium name="The MGC Project Team"/>
        </authorList>
    </citation>
    <scope>NUCLEOTIDE SEQUENCE [LARGE SCALE MRNA]</scope>
    <source>
        <strain>Czech II</strain>
        <tissue>Lung</tissue>
    </source>
</reference>
<reference key="5">
    <citation type="journal article" date="2003" name="J. Neurochem.">
        <title>Identification of members of the Bex gene family as olfactory marker protein (OMP) binding partners.</title>
        <authorList>
            <person name="Behrens M."/>
            <person name="Margolis J.W."/>
            <person name="Margolis F.L."/>
        </authorList>
    </citation>
    <scope>INTERACTION WITH OMP</scope>
</reference>
<reference key="6">
    <citation type="journal article" date="2004" name="J. Neurochem.">
        <title>The interaction of Bex and OMP reveals a dimer of OMP with a short half-life.</title>
        <authorList>
            <person name="Koo J.H."/>
            <person name="Gill S."/>
            <person name="Pannell L.K."/>
            <person name="Menco B.P.M."/>
            <person name="Margolis J.W."/>
            <person name="Margolis F.L."/>
        </authorList>
    </citation>
    <scope>INTERACTION WITH OMP</scope>
</reference>
<reference key="7">
    <citation type="journal article" date="2005" name="J. Comp. Neurol.">
        <title>Immunolocalization of Bex protein in the mouse brain and olfactory system.</title>
        <authorList>
            <person name="Koo J.H."/>
            <person name="Saraswati M."/>
            <person name="Margolis F.L."/>
        </authorList>
    </citation>
    <scope>TISSUE SPECIFICITY</scope>
</reference>
<reference key="8">
    <citation type="journal article" date="2014" name="Mol. Cell. Proteomics">
        <title>Immunoaffinity enrichment and mass spectrometry analysis of protein methylation.</title>
        <authorList>
            <person name="Guo A."/>
            <person name="Gu H."/>
            <person name="Zhou J."/>
            <person name="Mulhern D."/>
            <person name="Wang Y."/>
            <person name="Lee K.A."/>
            <person name="Yang V."/>
            <person name="Aguiar M."/>
            <person name="Kornhauser J."/>
            <person name="Jia X."/>
            <person name="Ren J."/>
            <person name="Beausoleil S.A."/>
            <person name="Silva J.C."/>
            <person name="Vemulapalli V."/>
            <person name="Bedford M.T."/>
            <person name="Comb M.J."/>
        </authorList>
    </citation>
    <scope>METHYLATION [LARGE SCALE ANALYSIS] AT ARG-51</scope>
    <scope>IDENTIFICATION BY MASS SPECTROMETRY [LARGE SCALE ANALYSIS]</scope>
    <source>
        <tissue>Brain</tissue>
        <tissue>Embryo</tissue>
    </source>
</reference>
<reference key="9">
    <citation type="journal article" date="2021" name="Cell">
        <title>Structural basis and regulation of the reductive stress response.</title>
        <authorList>
            <person name="Manford A.G."/>
            <person name="Mena E.L."/>
            <person name="Shih K.Y."/>
            <person name="Gee C.L."/>
            <person name="McMinimy R."/>
            <person name="Martinez-Gonzalez B."/>
            <person name="Sherriff R."/>
            <person name="Lew B."/>
            <person name="Zoltek M."/>
            <person name="Rodriguez-Perez F."/>
            <person name="Woldesenbet M."/>
            <person name="Kuriyan J."/>
            <person name="Rape M."/>
        </authorList>
    </citation>
    <scope>FUNCTION</scope>
</reference>
<feature type="chain" id="PRO_0000229778" description="Protein BEX2">
    <location>
        <begin position="1"/>
        <end position="129"/>
    </location>
</feature>
<feature type="region of interest" description="Disordered" evidence="4">
    <location>
        <begin position="1"/>
        <end position="37"/>
    </location>
</feature>
<feature type="region of interest" description="His cluster" evidence="3">
    <location>
        <begin position="118"/>
        <end position="122"/>
    </location>
</feature>
<feature type="compositionally biased region" description="Basic and acidic residues" evidence="4">
    <location>
        <begin position="15"/>
        <end position="36"/>
    </location>
</feature>
<feature type="binding site" evidence="3">
    <location>
        <position position="126"/>
    </location>
    <ligand>
        <name>Zn(2+)</name>
        <dbReference type="ChEBI" id="CHEBI:29105"/>
        <note>ligand shared with FEM1B</note>
    </ligand>
</feature>
<feature type="modified residue" description="Omega-N-methylarginine" evidence="12">
    <location>
        <position position="51"/>
    </location>
</feature>